<proteinExistence type="evidence at protein level"/>
<protein>
    <recommendedName>
        <fullName>Delta(8)-fatty-acid desaturase 1</fullName>
        <ecNumber evidence="4 5">1.14.19.29</ecNumber>
    </recommendedName>
    <alternativeName>
        <fullName>Delta(8)-sphingolipid desaturase 1</fullName>
    </alternativeName>
    <alternativeName>
        <fullName>Sphingoid long-chain base desaturase 1</fullName>
        <shortName>Sphingoid LCB desaturase 1</shortName>
    </alternativeName>
    <alternativeName>
        <fullName>Sphingolipid 8-(E/Z)-desaturase 1</fullName>
    </alternativeName>
</protein>
<dbReference type="EC" id="1.14.19.29" evidence="4 5"/>
<dbReference type="EMBL" id="AJ224161">
    <property type="protein sequence ID" value="CAA11858.1"/>
    <property type="molecule type" value="mRNA"/>
</dbReference>
<dbReference type="EMBL" id="AL132962">
    <property type="protein sequence ID" value="CAB71088.1"/>
    <property type="molecule type" value="Genomic_DNA"/>
</dbReference>
<dbReference type="EMBL" id="CP002686">
    <property type="protein sequence ID" value="AEE80226.1"/>
    <property type="molecule type" value="Genomic_DNA"/>
</dbReference>
<dbReference type="EMBL" id="AF428420">
    <property type="protein sequence ID" value="AAL16189.1"/>
    <property type="molecule type" value="mRNA"/>
</dbReference>
<dbReference type="EMBL" id="BT000442">
    <property type="protein sequence ID" value="AAN17419.1"/>
    <property type="molecule type" value="mRNA"/>
</dbReference>
<dbReference type="EMBL" id="BT003379">
    <property type="protein sequence ID" value="AAO30042.1"/>
    <property type="molecule type" value="mRNA"/>
</dbReference>
<dbReference type="EMBL" id="AY087345">
    <property type="protein sequence ID" value="AAM64895.1"/>
    <property type="molecule type" value="mRNA"/>
</dbReference>
<dbReference type="PIR" id="T47950">
    <property type="entry name" value="T47950"/>
</dbReference>
<dbReference type="RefSeq" id="NP_191717.1">
    <property type="nucleotide sequence ID" value="NM_116023.2"/>
</dbReference>
<dbReference type="SMR" id="Q9ZRP7"/>
<dbReference type="BioGRID" id="10645">
    <property type="interactions" value="1"/>
</dbReference>
<dbReference type="FunCoup" id="Q9ZRP7">
    <property type="interactions" value="1454"/>
</dbReference>
<dbReference type="IntAct" id="Q9ZRP7">
    <property type="interactions" value="1"/>
</dbReference>
<dbReference type="STRING" id="3702.Q9ZRP7"/>
<dbReference type="PaxDb" id="3702-AT3G61580.1"/>
<dbReference type="ProteomicsDB" id="234493"/>
<dbReference type="EnsemblPlants" id="AT3G61580.1">
    <property type="protein sequence ID" value="AT3G61580.1"/>
    <property type="gene ID" value="AT3G61580"/>
</dbReference>
<dbReference type="GeneID" id="825331"/>
<dbReference type="Gramene" id="AT3G61580.1">
    <property type="protein sequence ID" value="AT3G61580.1"/>
    <property type="gene ID" value="AT3G61580"/>
</dbReference>
<dbReference type="KEGG" id="ath:AT3G61580"/>
<dbReference type="Araport" id="AT3G61580"/>
<dbReference type="TAIR" id="AT3G61580">
    <property type="gene designation" value="SLD1"/>
</dbReference>
<dbReference type="eggNOG" id="KOG4232">
    <property type="taxonomic scope" value="Eukaryota"/>
</dbReference>
<dbReference type="HOGENOM" id="CLU_016265_2_0_1"/>
<dbReference type="InParanoid" id="Q9ZRP7"/>
<dbReference type="OMA" id="LSANWWN"/>
<dbReference type="OrthoDB" id="260091at2759"/>
<dbReference type="PhylomeDB" id="Q9ZRP7"/>
<dbReference type="BioCyc" id="ARA:AT3G61580-MONOMER"/>
<dbReference type="BioCyc" id="MetaCyc:AT3G61580-MONOMER"/>
<dbReference type="BRENDA" id="1.14.19.29">
    <property type="organism ID" value="399"/>
</dbReference>
<dbReference type="BRENDA" id="1.14.19.4">
    <property type="organism ID" value="399"/>
</dbReference>
<dbReference type="PRO" id="PR:Q9ZRP7"/>
<dbReference type="Proteomes" id="UP000006548">
    <property type="component" value="Chromosome 3"/>
</dbReference>
<dbReference type="ExpressionAtlas" id="Q9ZRP7">
    <property type="expression patterns" value="baseline and differential"/>
</dbReference>
<dbReference type="GO" id="GO:0005783">
    <property type="term" value="C:endoplasmic reticulum"/>
    <property type="evidence" value="ECO:0000314"/>
    <property type="project" value="UniProtKB"/>
</dbReference>
<dbReference type="GO" id="GO:0005789">
    <property type="term" value="C:endoplasmic reticulum membrane"/>
    <property type="evidence" value="ECO:0007669"/>
    <property type="project" value="UniProtKB-SubCell"/>
</dbReference>
<dbReference type="GO" id="GO:0046872">
    <property type="term" value="F:metal ion binding"/>
    <property type="evidence" value="ECO:0007669"/>
    <property type="project" value="UniProtKB-KW"/>
</dbReference>
<dbReference type="GO" id="GO:0052631">
    <property type="term" value="F:sphingolipid 8-(E/Z)-desaturase activity"/>
    <property type="evidence" value="ECO:0000314"/>
    <property type="project" value="TAIR"/>
</dbReference>
<dbReference type="GO" id="GO:0070417">
    <property type="term" value="P:cellular response to cold"/>
    <property type="evidence" value="ECO:0000315"/>
    <property type="project" value="UniProtKB"/>
</dbReference>
<dbReference type="GO" id="GO:0006629">
    <property type="term" value="P:lipid metabolic process"/>
    <property type="evidence" value="ECO:0000314"/>
    <property type="project" value="TAIR"/>
</dbReference>
<dbReference type="GO" id="GO:0030148">
    <property type="term" value="P:sphingolipid biosynthetic process"/>
    <property type="evidence" value="ECO:0000315"/>
    <property type="project" value="UniProtKB"/>
</dbReference>
<dbReference type="CDD" id="cd03506">
    <property type="entry name" value="Delta6-FADS-like"/>
    <property type="match status" value="1"/>
</dbReference>
<dbReference type="FunFam" id="3.10.120.10:FF:000021">
    <property type="entry name" value="Delta(8)-fatty-acid desaturase 2"/>
    <property type="match status" value="1"/>
</dbReference>
<dbReference type="Gene3D" id="3.10.120.10">
    <property type="entry name" value="Cytochrome b5-like heme/steroid binding domain"/>
    <property type="match status" value="1"/>
</dbReference>
<dbReference type="InterPro" id="IPR001199">
    <property type="entry name" value="Cyt_B5-like_heme/steroid-bd"/>
</dbReference>
<dbReference type="InterPro" id="IPR036400">
    <property type="entry name" value="Cyt_B5-like_heme/steroid_sf"/>
</dbReference>
<dbReference type="InterPro" id="IPR005804">
    <property type="entry name" value="FA_desaturase_dom"/>
</dbReference>
<dbReference type="InterPro" id="IPR012171">
    <property type="entry name" value="Fatty_acid_desaturase"/>
</dbReference>
<dbReference type="PANTHER" id="PTHR19353:SF63">
    <property type="entry name" value="DELTA(8)-FATTY-ACID DESATURASE 1"/>
    <property type="match status" value="1"/>
</dbReference>
<dbReference type="PANTHER" id="PTHR19353">
    <property type="entry name" value="FATTY ACID DESATURASE 2"/>
    <property type="match status" value="1"/>
</dbReference>
<dbReference type="Pfam" id="PF00173">
    <property type="entry name" value="Cyt-b5"/>
    <property type="match status" value="1"/>
</dbReference>
<dbReference type="Pfam" id="PF00487">
    <property type="entry name" value="FA_desaturase"/>
    <property type="match status" value="1"/>
</dbReference>
<dbReference type="PIRSF" id="PIRSF015921">
    <property type="entry name" value="FA_sphinglp_des"/>
    <property type="match status" value="1"/>
</dbReference>
<dbReference type="SMART" id="SM01117">
    <property type="entry name" value="Cyt-b5"/>
    <property type="match status" value="1"/>
</dbReference>
<dbReference type="SUPFAM" id="SSF55856">
    <property type="entry name" value="Cytochrome b5-like heme/steroid binding domain"/>
    <property type="match status" value="1"/>
</dbReference>
<dbReference type="PROSITE" id="PS50255">
    <property type="entry name" value="CYTOCHROME_B5_2"/>
    <property type="match status" value="1"/>
</dbReference>
<sequence length="449" mass="51675">MAEETEKKYITNEDLKKHNKSGDLWIAIQGKVYNVSDWIKTHPGGDTVILNLVGQDVTDAFIAFHPGTAWHHLDHLFTGYHIRDFQVSEVSRDYRRMAAEFRKLGLFENKGHVTLYTLAFVAAMFLGVLYGVLACTSVFAHQIAAALLGLLWIQSAYIGHDSGHYVIMSNKSYNRFAQLLSGNCLTGISIAWWKWTHNAHHLACNSLDYDPDLQHIPVFAVSTKFFSSLTSRFYDRKLTFDPVARFLVSYQHFTYYPVMCFGRINLFIQTFLLLFSKREVPDRALNFAGILVFWTWFPLLVSCLPNWPERFFFVFTSFTVTALQHIQFTLNHFAADVYVGPPTGSDWFEKQAAGTIDISCRSYMDWFFGGLQFQLEHHLFPRLPRCHLRKVSPVVQELCKKHNLPYRSMSWFEANVLTINTLKTAAYQARDVANPVVKNLVWEALNTHG</sequence>
<accession>Q9ZRP7</accession>
<accession>Q8LB96</accession>
<organism>
    <name type="scientific">Arabidopsis thaliana</name>
    <name type="common">Mouse-ear cress</name>
    <dbReference type="NCBI Taxonomy" id="3702"/>
    <lineage>
        <taxon>Eukaryota</taxon>
        <taxon>Viridiplantae</taxon>
        <taxon>Streptophyta</taxon>
        <taxon>Embryophyta</taxon>
        <taxon>Tracheophyta</taxon>
        <taxon>Spermatophyta</taxon>
        <taxon>Magnoliopsida</taxon>
        <taxon>eudicotyledons</taxon>
        <taxon>Gunneridae</taxon>
        <taxon>Pentapetalae</taxon>
        <taxon>rosids</taxon>
        <taxon>malvids</taxon>
        <taxon>Brassicales</taxon>
        <taxon>Brassicaceae</taxon>
        <taxon>Camelineae</taxon>
        <taxon>Arabidopsis</taxon>
    </lineage>
</organism>
<evidence type="ECO:0000250" key="1"/>
<evidence type="ECO:0000255" key="2"/>
<evidence type="ECO:0000255" key="3">
    <source>
        <dbReference type="PROSITE-ProRule" id="PRU00279"/>
    </source>
</evidence>
<evidence type="ECO:0000269" key="4">
    <source>
    </source>
</evidence>
<evidence type="ECO:0000269" key="5">
    <source>
    </source>
</evidence>
<evidence type="ECO:0000305" key="6"/>
<evidence type="ECO:0000305" key="7">
    <source>
    </source>
</evidence>
<reference key="1">
    <citation type="journal article" date="1998" name="J. Biol. Chem.">
        <title>A sphingolipid desaturase from higher plants. Identification of a new cytochrome b5 fusion protein.</title>
        <authorList>
            <person name="Sperling P."/>
            <person name="Zaehringer U."/>
            <person name="Heinz E."/>
        </authorList>
    </citation>
    <scope>NUCLEOTIDE SEQUENCE [MRNA]</scope>
    <scope>FUNCTION</scope>
    <scope>CATALYTIC ACTIVITY</scope>
    <source>
        <strain>cv. Columbia</strain>
    </source>
</reference>
<reference key="2">
    <citation type="journal article" date="2000" name="Nature">
        <title>Sequence and analysis of chromosome 3 of the plant Arabidopsis thaliana.</title>
        <authorList>
            <person name="Salanoubat M."/>
            <person name="Lemcke K."/>
            <person name="Rieger M."/>
            <person name="Ansorge W."/>
            <person name="Unseld M."/>
            <person name="Fartmann B."/>
            <person name="Valle G."/>
            <person name="Bloecker H."/>
            <person name="Perez-Alonso M."/>
            <person name="Obermaier B."/>
            <person name="Delseny M."/>
            <person name="Boutry M."/>
            <person name="Grivell L.A."/>
            <person name="Mache R."/>
            <person name="Puigdomenech P."/>
            <person name="De Simone V."/>
            <person name="Choisne N."/>
            <person name="Artiguenave F."/>
            <person name="Robert C."/>
            <person name="Brottier P."/>
            <person name="Wincker P."/>
            <person name="Cattolico L."/>
            <person name="Weissenbach J."/>
            <person name="Saurin W."/>
            <person name="Quetier F."/>
            <person name="Schaefer M."/>
            <person name="Mueller-Auer S."/>
            <person name="Gabel C."/>
            <person name="Fuchs M."/>
            <person name="Benes V."/>
            <person name="Wurmbach E."/>
            <person name="Drzonek H."/>
            <person name="Erfle H."/>
            <person name="Jordan N."/>
            <person name="Bangert S."/>
            <person name="Wiedelmann R."/>
            <person name="Kranz H."/>
            <person name="Voss H."/>
            <person name="Holland R."/>
            <person name="Brandt P."/>
            <person name="Nyakatura G."/>
            <person name="Vezzi A."/>
            <person name="D'Angelo M."/>
            <person name="Pallavicini A."/>
            <person name="Toppo S."/>
            <person name="Simionati B."/>
            <person name="Conrad A."/>
            <person name="Hornischer K."/>
            <person name="Kauer G."/>
            <person name="Loehnert T.-H."/>
            <person name="Nordsiek G."/>
            <person name="Reichelt J."/>
            <person name="Scharfe M."/>
            <person name="Schoen O."/>
            <person name="Bargues M."/>
            <person name="Terol J."/>
            <person name="Climent J."/>
            <person name="Navarro P."/>
            <person name="Collado C."/>
            <person name="Perez-Perez A."/>
            <person name="Ottenwaelder B."/>
            <person name="Duchemin D."/>
            <person name="Cooke R."/>
            <person name="Laudie M."/>
            <person name="Berger-Llauro C."/>
            <person name="Purnelle B."/>
            <person name="Masuy D."/>
            <person name="de Haan M."/>
            <person name="Maarse A.C."/>
            <person name="Alcaraz J.-P."/>
            <person name="Cottet A."/>
            <person name="Casacuberta E."/>
            <person name="Monfort A."/>
            <person name="Argiriou A."/>
            <person name="Flores M."/>
            <person name="Liguori R."/>
            <person name="Vitale D."/>
            <person name="Mannhaupt G."/>
            <person name="Haase D."/>
            <person name="Schoof H."/>
            <person name="Rudd S."/>
            <person name="Zaccaria P."/>
            <person name="Mewes H.-W."/>
            <person name="Mayer K.F.X."/>
            <person name="Kaul S."/>
            <person name="Town C.D."/>
            <person name="Koo H.L."/>
            <person name="Tallon L.J."/>
            <person name="Jenkins J."/>
            <person name="Rooney T."/>
            <person name="Rizzo M."/>
            <person name="Walts A."/>
            <person name="Utterback T."/>
            <person name="Fujii C.Y."/>
            <person name="Shea T.P."/>
            <person name="Creasy T.H."/>
            <person name="Haas B."/>
            <person name="Maiti R."/>
            <person name="Wu D."/>
            <person name="Peterson J."/>
            <person name="Van Aken S."/>
            <person name="Pai G."/>
            <person name="Militscher J."/>
            <person name="Sellers P."/>
            <person name="Gill J.E."/>
            <person name="Feldblyum T.V."/>
            <person name="Preuss D."/>
            <person name="Lin X."/>
            <person name="Nierman W.C."/>
            <person name="Salzberg S.L."/>
            <person name="White O."/>
            <person name="Venter J.C."/>
            <person name="Fraser C.M."/>
            <person name="Kaneko T."/>
            <person name="Nakamura Y."/>
            <person name="Sato S."/>
            <person name="Kato T."/>
            <person name="Asamizu E."/>
            <person name="Sasamoto S."/>
            <person name="Kimura T."/>
            <person name="Idesawa K."/>
            <person name="Kawashima K."/>
            <person name="Kishida Y."/>
            <person name="Kiyokawa C."/>
            <person name="Kohara M."/>
            <person name="Matsumoto M."/>
            <person name="Matsuno A."/>
            <person name="Muraki A."/>
            <person name="Nakayama S."/>
            <person name="Nakazaki N."/>
            <person name="Shinpo S."/>
            <person name="Takeuchi C."/>
            <person name="Wada T."/>
            <person name="Watanabe A."/>
            <person name="Yamada M."/>
            <person name="Yasuda M."/>
            <person name="Tabata S."/>
        </authorList>
    </citation>
    <scope>NUCLEOTIDE SEQUENCE [LARGE SCALE GENOMIC DNA]</scope>
    <source>
        <strain>cv. Columbia</strain>
    </source>
</reference>
<reference key="3">
    <citation type="journal article" date="2017" name="Plant J.">
        <title>Araport11: a complete reannotation of the Arabidopsis thaliana reference genome.</title>
        <authorList>
            <person name="Cheng C.Y."/>
            <person name="Krishnakumar V."/>
            <person name="Chan A.P."/>
            <person name="Thibaud-Nissen F."/>
            <person name="Schobel S."/>
            <person name="Town C.D."/>
        </authorList>
    </citation>
    <scope>GENOME REANNOTATION</scope>
    <source>
        <strain>cv. Columbia</strain>
    </source>
</reference>
<reference key="4">
    <citation type="journal article" date="2003" name="Science">
        <title>Empirical analysis of transcriptional activity in the Arabidopsis genome.</title>
        <authorList>
            <person name="Yamada K."/>
            <person name="Lim J."/>
            <person name="Dale J.M."/>
            <person name="Chen H."/>
            <person name="Shinn P."/>
            <person name="Palm C.J."/>
            <person name="Southwick A.M."/>
            <person name="Wu H.C."/>
            <person name="Kim C.J."/>
            <person name="Nguyen M."/>
            <person name="Pham P.K."/>
            <person name="Cheuk R.F."/>
            <person name="Karlin-Newmann G."/>
            <person name="Liu S.X."/>
            <person name="Lam B."/>
            <person name="Sakano H."/>
            <person name="Wu T."/>
            <person name="Yu G."/>
            <person name="Miranda M."/>
            <person name="Quach H.L."/>
            <person name="Tripp M."/>
            <person name="Chang C.H."/>
            <person name="Lee J.M."/>
            <person name="Toriumi M.J."/>
            <person name="Chan M.M."/>
            <person name="Tang C.C."/>
            <person name="Onodera C.S."/>
            <person name="Deng J.M."/>
            <person name="Akiyama K."/>
            <person name="Ansari Y."/>
            <person name="Arakawa T."/>
            <person name="Banh J."/>
            <person name="Banno F."/>
            <person name="Bowser L."/>
            <person name="Brooks S.Y."/>
            <person name="Carninci P."/>
            <person name="Chao Q."/>
            <person name="Choy N."/>
            <person name="Enju A."/>
            <person name="Goldsmith A.D."/>
            <person name="Gurjal M."/>
            <person name="Hansen N.F."/>
            <person name="Hayashizaki Y."/>
            <person name="Johnson-Hopson C."/>
            <person name="Hsuan V.W."/>
            <person name="Iida K."/>
            <person name="Karnes M."/>
            <person name="Khan S."/>
            <person name="Koesema E."/>
            <person name="Ishida J."/>
            <person name="Jiang P.X."/>
            <person name="Jones T."/>
            <person name="Kawai J."/>
            <person name="Kamiya A."/>
            <person name="Meyers C."/>
            <person name="Nakajima M."/>
            <person name="Narusaka M."/>
            <person name="Seki M."/>
            <person name="Sakurai T."/>
            <person name="Satou M."/>
            <person name="Tamse R."/>
            <person name="Vaysberg M."/>
            <person name="Wallender E.K."/>
            <person name="Wong C."/>
            <person name="Yamamura Y."/>
            <person name="Yuan S."/>
            <person name="Shinozaki K."/>
            <person name="Davis R.W."/>
            <person name="Theologis A."/>
            <person name="Ecker J.R."/>
        </authorList>
    </citation>
    <scope>NUCLEOTIDE SEQUENCE [LARGE SCALE MRNA]</scope>
    <source>
        <strain>cv. Columbia</strain>
    </source>
</reference>
<reference key="5">
    <citation type="submission" date="2002-03" db="EMBL/GenBank/DDBJ databases">
        <title>Full-length cDNA from Arabidopsis thaliana.</title>
        <authorList>
            <person name="Brover V.V."/>
            <person name="Troukhan M.E."/>
            <person name="Alexandrov N.A."/>
            <person name="Lu Y.-P."/>
            <person name="Flavell R.B."/>
            <person name="Feldmann K.A."/>
        </authorList>
    </citation>
    <scope>NUCLEOTIDE SEQUENCE [LARGE SCALE MRNA]</scope>
</reference>
<reference key="6">
    <citation type="journal article" date="2012" name="Plant J.">
        <title>Sphingolipid Delta8 unsaturation is important for glucosylceramide biosynthesis and low-temperature performance in Arabidopsis.</title>
        <authorList>
            <person name="Chen M."/>
            <person name="Markham J.E."/>
            <person name="Cahoon E.B."/>
        </authorList>
    </citation>
    <scope>FUNCTION</scope>
    <scope>CATALYTIC ACTIVITY</scope>
    <scope>SUBCELLULAR LOCATION</scope>
    <scope>TISSUE SPECIFICITY</scope>
    <scope>DISRUPTION PHENOTYPE</scope>
</reference>
<gene>
    <name type="primary">SLD1</name>
    <name type="ordered locus">At3g61580</name>
    <name type="ORF">F2A19.180</name>
</gene>
<name>SLD1_ARATH</name>
<comment type="function">
    <text evidence="4 5">Plays a major role as delta(8)-fatty-acid desaturase which introduces a double bond at the 8-position in the long-chain base (LCB) of ceramides with or without a hydroxy group at the 4-position. The enzyme produces both the 8E and 8Z isomers (in a 4:1 ratio). This structural modification contributes to the quantitative partitioning of ceramides between the two major sphingolipid classes, glucosylceramides and glycosylinositolphosphoryl ceramides. Sphingolipids are important membrane components involved in environmental stress responses, such as resistance to chilling, and act as cell signaling molecules.</text>
</comment>
<comment type="catalytic activity">
    <reaction evidence="4 5">
        <text>an N-acyl-(4R)-4-hydroxysphinganine + 2 Fe(II)-[cytochrome b5] + O2 + 2 H(+) = a (4R,8E)-4-hydroxysphingenine ceramide + 2 Fe(III)-[cytochrome b5] + 2 H2O</text>
        <dbReference type="Rhea" id="RHEA:46268"/>
        <dbReference type="Rhea" id="RHEA-COMP:10438"/>
        <dbReference type="Rhea" id="RHEA-COMP:10439"/>
        <dbReference type="ChEBI" id="CHEBI:15377"/>
        <dbReference type="ChEBI" id="CHEBI:15378"/>
        <dbReference type="ChEBI" id="CHEBI:15379"/>
        <dbReference type="ChEBI" id="CHEBI:29033"/>
        <dbReference type="ChEBI" id="CHEBI:29034"/>
        <dbReference type="ChEBI" id="CHEBI:31998"/>
        <dbReference type="ChEBI" id="CHEBI:50934"/>
        <dbReference type="EC" id="1.14.19.29"/>
    </reaction>
</comment>
<comment type="catalytic activity">
    <reaction evidence="4 5">
        <text>an N-acyl-(4R)-4-hydroxysphinganine + 2 Fe(II)-[cytochrome b5] + O2 + 2 H(+) = a (4R,8Z)-4-hydroxysphing-8-enine ceramide + 2 Fe(III)-[cytochrome b5] + 2 H2O</text>
        <dbReference type="Rhea" id="RHEA:46272"/>
        <dbReference type="Rhea" id="RHEA-COMP:10438"/>
        <dbReference type="Rhea" id="RHEA-COMP:10439"/>
        <dbReference type="ChEBI" id="CHEBI:15377"/>
        <dbReference type="ChEBI" id="CHEBI:15378"/>
        <dbReference type="ChEBI" id="CHEBI:15379"/>
        <dbReference type="ChEBI" id="CHEBI:29033"/>
        <dbReference type="ChEBI" id="CHEBI:29034"/>
        <dbReference type="ChEBI" id="CHEBI:31998"/>
        <dbReference type="ChEBI" id="CHEBI:85951"/>
        <dbReference type="EC" id="1.14.19.29"/>
    </reaction>
</comment>
<comment type="cofactor">
    <cofactor evidence="1">
        <name>Fe cation</name>
        <dbReference type="ChEBI" id="CHEBI:24875"/>
    </cofactor>
</comment>
<comment type="subcellular location">
    <subcellularLocation>
        <location evidence="7">Endoplasmic reticulum membrane</location>
        <topology evidence="6">Multi-pass membrane protein</topology>
    </subcellularLocation>
</comment>
<comment type="tissue specificity">
    <text evidence="4">Highly expressed in flowers. Expressed in roots, leaves, stems and siliques.</text>
</comment>
<comment type="domain">
    <text evidence="1">The histidine box domains may contain the active site and/or be involved in metal ion binding.</text>
</comment>
<comment type="disruption phenotype">
    <text evidence="4">No visible phenotype under normal growth conditions, but mutant plants have strongly reduced levels of unsaturated LCB sphingolipids in all organs and show enhanced sensitivity to prolonged low-temperature exposure.</text>
</comment>
<comment type="similarity">
    <text evidence="6">Belongs to the fatty acid desaturase type 1 family.</text>
</comment>
<keyword id="KW-0249">Electron transport</keyword>
<keyword id="KW-0256">Endoplasmic reticulum</keyword>
<keyword id="KW-0349">Heme</keyword>
<keyword id="KW-0408">Iron</keyword>
<keyword id="KW-0443">Lipid metabolism</keyword>
<keyword id="KW-0472">Membrane</keyword>
<keyword id="KW-0479">Metal-binding</keyword>
<keyword id="KW-0560">Oxidoreductase</keyword>
<keyword id="KW-1185">Reference proteome</keyword>
<keyword id="KW-0746">Sphingolipid metabolism</keyword>
<keyword id="KW-0812">Transmembrane</keyword>
<keyword id="KW-1133">Transmembrane helix</keyword>
<keyword id="KW-0813">Transport</keyword>
<feature type="chain" id="PRO_0000429373" description="Delta(8)-fatty-acid desaturase 1">
    <location>
        <begin position="1"/>
        <end position="449"/>
    </location>
</feature>
<feature type="transmembrane region" description="Helical" evidence="2">
    <location>
        <begin position="113"/>
        <end position="133"/>
    </location>
</feature>
<feature type="transmembrane region" description="Helical" evidence="2">
    <location>
        <begin position="138"/>
        <end position="158"/>
    </location>
</feature>
<feature type="transmembrane region" description="Helical" evidence="2">
    <location>
        <begin position="173"/>
        <end position="195"/>
    </location>
</feature>
<feature type="transmembrane region" description="Helical" evidence="2">
    <location>
        <begin position="255"/>
        <end position="275"/>
    </location>
</feature>
<feature type="transmembrane region" description="Helical" evidence="2">
    <location>
        <begin position="284"/>
        <end position="304"/>
    </location>
</feature>
<feature type="transmembrane region" description="Helical" evidence="2">
    <location>
        <begin position="311"/>
        <end position="331"/>
    </location>
</feature>
<feature type="domain" description="Cytochrome b5 heme-binding" evidence="3">
    <location>
        <begin position="7"/>
        <end position="91"/>
    </location>
</feature>
<feature type="short sequence motif" description="Histidine box-1" evidence="6">
    <location>
        <begin position="160"/>
        <end position="164"/>
    </location>
</feature>
<feature type="short sequence motif" description="Histidine box-2" evidence="6">
    <location>
        <begin position="197"/>
        <end position="201"/>
    </location>
</feature>
<feature type="short sequence motif" description="Histidine box-3" evidence="6">
    <location>
        <begin position="374"/>
        <end position="378"/>
    </location>
</feature>
<feature type="binding site" description="axial binding residue" evidence="3">
    <location>
        <position position="42"/>
    </location>
    <ligand>
        <name>heme</name>
        <dbReference type="ChEBI" id="CHEBI:30413"/>
    </ligand>
    <ligandPart>
        <name>Fe</name>
        <dbReference type="ChEBI" id="CHEBI:18248"/>
    </ligandPart>
</feature>
<feature type="binding site" description="axial binding residue" evidence="3">
    <location>
        <position position="65"/>
    </location>
    <ligand>
        <name>heme</name>
        <dbReference type="ChEBI" id="CHEBI:30413"/>
    </ligand>
    <ligandPart>
        <name>Fe</name>
        <dbReference type="ChEBI" id="CHEBI:18248"/>
    </ligandPart>
</feature>
<feature type="sequence conflict" description="In Ref. 5; AAM64895." evidence="6" ref="5">
    <original>G</original>
    <variation>R</variation>
    <location>
        <position position="127"/>
    </location>
</feature>
<feature type="sequence conflict" description="In Ref. 5; AAM64895." evidence="6" ref="5">
    <original>S</original>
    <variation>G</variation>
    <location>
        <position position="317"/>
    </location>
</feature>